<gene>
    <name evidence="1" type="primary">uvrC</name>
    <name type="ordered locus">CBU_1185</name>
</gene>
<accession>Q83CD5</accession>
<keyword id="KW-0963">Cytoplasm</keyword>
<keyword id="KW-0227">DNA damage</keyword>
<keyword id="KW-0228">DNA excision</keyword>
<keyword id="KW-0234">DNA repair</keyword>
<keyword id="KW-0267">Excision nuclease</keyword>
<keyword id="KW-1185">Reference proteome</keyword>
<keyword id="KW-0742">SOS response</keyword>
<evidence type="ECO:0000255" key="1">
    <source>
        <dbReference type="HAMAP-Rule" id="MF_00203"/>
    </source>
</evidence>
<sequence>MTIDNPSAFLKTLPTGSGVYQMQDAQGKVIYVGKARNLQKRVSSYFRRQLDSKTQAMMAQVQSIQTTITRNENEALLLEASFIKQFRPRYNVLLRDDKSYPYLYLATHQKFPRLDFYRGAKKAPGRYFGPYPNAGSVRENLALIQKLFKLRQCSESFFKNRTRPCLQYQIKRCTAPCVGYVNEQEYRRQVEDAILFFEGKNDQVIIKLTERMEVTSENLVFEEAAHYRDQIRQLRRLQKQQIITGGKGNIDIIGIAESNGAIGFAILFIRSGRMIGHKPFFPNTPLGTTLQTALVEFIPQYYLSPLRNGDIPERIVTSEPLEDRLWIQRALSSGLNRKLAITDQKRAPYKQWQAMAALNAAQALSQHLAQKNTFALKLEAIQKSLALPNPIARIECFDISHTLGEATVASCVVFGEEGPIKKDYRRFNISGVTPGDDYGALRQALTRRYVRLKEGEGILPDVLLIDGGMGQLRQAAEVLEELQVSGVILTAIAKGPGRKAGLEKLFVWGRREEIHLPADNIAFHLIQQIRDEAHRFAITAHCNRRAKRRVESTLQEIEGIGPKRRQKLLKYFGGLQELQRASIEEIARVPGVSETLAKAIYDACHQHKG</sequence>
<feature type="chain" id="PRO_0000227421" description="UvrABC system protein C">
    <location>
        <begin position="1"/>
        <end position="609"/>
    </location>
</feature>
<feature type="domain" description="GIY-YIG" evidence="1">
    <location>
        <begin position="15"/>
        <end position="92"/>
    </location>
</feature>
<feature type="domain" description="UVR" evidence="1">
    <location>
        <begin position="202"/>
        <end position="237"/>
    </location>
</feature>
<name>UVRC_COXBU</name>
<proteinExistence type="inferred from homology"/>
<reference key="1">
    <citation type="journal article" date="2003" name="Proc. Natl. Acad. Sci. U.S.A.">
        <title>Complete genome sequence of the Q-fever pathogen, Coxiella burnetii.</title>
        <authorList>
            <person name="Seshadri R."/>
            <person name="Paulsen I.T."/>
            <person name="Eisen J.A."/>
            <person name="Read T.D."/>
            <person name="Nelson K.E."/>
            <person name="Nelson W.C."/>
            <person name="Ward N.L."/>
            <person name="Tettelin H."/>
            <person name="Davidsen T.M."/>
            <person name="Beanan M.J."/>
            <person name="DeBoy R.T."/>
            <person name="Daugherty S.C."/>
            <person name="Brinkac L.M."/>
            <person name="Madupu R."/>
            <person name="Dodson R.J."/>
            <person name="Khouri H.M."/>
            <person name="Lee K.H."/>
            <person name="Carty H.A."/>
            <person name="Scanlan D."/>
            <person name="Heinzen R.A."/>
            <person name="Thompson H.A."/>
            <person name="Samuel J.E."/>
            <person name="Fraser C.M."/>
            <person name="Heidelberg J.F."/>
        </authorList>
    </citation>
    <scope>NUCLEOTIDE SEQUENCE [LARGE SCALE GENOMIC DNA]</scope>
    <source>
        <strain>RSA 493 / Nine Mile phase I</strain>
    </source>
</reference>
<protein>
    <recommendedName>
        <fullName evidence="1">UvrABC system protein C</fullName>
        <shortName evidence="1">Protein UvrC</shortName>
    </recommendedName>
    <alternativeName>
        <fullName evidence="1">Excinuclease ABC subunit C</fullName>
    </alternativeName>
</protein>
<comment type="function">
    <text evidence="1">The UvrABC repair system catalyzes the recognition and processing of DNA lesions. UvrC both incises the 5' and 3' sides of the lesion. The N-terminal half is responsible for the 3' incision and the C-terminal half is responsible for the 5' incision.</text>
</comment>
<comment type="subunit">
    <text evidence="1">Interacts with UvrB in an incision complex.</text>
</comment>
<comment type="subcellular location">
    <subcellularLocation>
        <location evidence="1">Cytoplasm</location>
    </subcellularLocation>
</comment>
<comment type="similarity">
    <text evidence="1">Belongs to the UvrC family.</text>
</comment>
<organism>
    <name type="scientific">Coxiella burnetii (strain RSA 493 / Nine Mile phase I)</name>
    <dbReference type="NCBI Taxonomy" id="227377"/>
    <lineage>
        <taxon>Bacteria</taxon>
        <taxon>Pseudomonadati</taxon>
        <taxon>Pseudomonadota</taxon>
        <taxon>Gammaproteobacteria</taxon>
        <taxon>Legionellales</taxon>
        <taxon>Coxiellaceae</taxon>
        <taxon>Coxiella</taxon>
    </lineage>
</organism>
<dbReference type="EMBL" id="AE016828">
    <property type="protein sequence ID" value="AAO90694.1"/>
    <property type="molecule type" value="Genomic_DNA"/>
</dbReference>
<dbReference type="RefSeq" id="NP_820180.1">
    <property type="nucleotide sequence ID" value="NC_002971.4"/>
</dbReference>
<dbReference type="RefSeq" id="WP_010958058.1">
    <property type="nucleotide sequence ID" value="NC_002971.4"/>
</dbReference>
<dbReference type="SMR" id="Q83CD5"/>
<dbReference type="STRING" id="227377.CBU_1185"/>
<dbReference type="EnsemblBacteria" id="AAO90694">
    <property type="protein sequence ID" value="AAO90694"/>
    <property type="gene ID" value="CBU_1185"/>
</dbReference>
<dbReference type="GeneID" id="1209088"/>
<dbReference type="KEGG" id="cbu:CBU_1185"/>
<dbReference type="PATRIC" id="fig|227377.7.peg.1182"/>
<dbReference type="eggNOG" id="COG0322">
    <property type="taxonomic scope" value="Bacteria"/>
</dbReference>
<dbReference type="HOGENOM" id="CLU_014841_3_0_6"/>
<dbReference type="OrthoDB" id="9804933at2"/>
<dbReference type="Proteomes" id="UP000002671">
    <property type="component" value="Chromosome"/>
</dbReference>
<dbReference type="GO" id="GO:0005737">
    <property type="term" value="C:cytoplasm"/>
    <property type="evidence" value="ECO:0007669"/>
    <property type="project" value="UniProtKB-SubCell"/>
</dbReference>
<dbReference type="GO" id="GO:0009380">
    <property type="term" value="C:excinuclease repair complex"/>
    <property type="evidence" value="ECO:0000318"/>
    <property type="project" value="GO_Central"/>
</dbReference>
<dbReference type="GO" id="GO:0003677">
    <property type="term" value="F:DNA binding"/>
    <property type="evidence" value="ECO:0007669"/>
    <property type="project" value="UniProtKB-UniRule"/>
</dbReference>
<dbReference type="GO" id="GO:0009381">
    <property type="term" value="F:excinuclease ABC activity"/>
    <property type="evidence" value="ECO:0007669"/>
    <property type="project" value="UniProtKB-UniRule"/>
</dbReference>
<dbReference type="GO" id="GO:0006974">
    <property type="term" value="P:DNA damage response"/>
    <property type="evidence" value="ECO:0000318"/>
    <property type="project" value="GO_Central"/>
</dbReference>
<dbReference type="GO" id="GO:0006289">
    <property type="term" value="P:nucleotide-excision repair"/>
    <property type="evidence" value="ECO:0007669"/>
    <property type="project" value="UniProtKB-UniRule"/>
</dbReference>
<dbReference type="GO" id="GO:0009432">
    <property type="term" value="P:SOS response"/>
    <property type="evidence" value="ECO:0007669"/>
    <property type="project" value="UniProtKB-UniRule"/>
</dbReference>
<dbReference type="CDD" id="cd10434">
    <property type="entry name" value="GIY-YIG_UvrC_Cho"/>
    <property type="match status" value="1"/>
</dbReference>
<dbReference type="FunFam" id="1.10.150.20:FF:000005">
    <property type="entry name" value="UvrABC system protein C"/>
    <property type="match status" value="1"/>
</dbReference>
<dbReference type="FunFam" id="3.30.420.340:FF:000001">
    <property type="entry name" value="UvrABC system protein C"/>
    <property type="match status" value="1"/>
</dbReference>
<dbReference type="FunFam" id="3.40.1440.10:FF:000001">
    <property type="entry name" value="UvrABC system protein C"/>
    <property type="match status" value="1"/>
</dbReference>
<dbReference type="FunFam" id="4.10.860.10:FF:000002">
    <property type="entry name" value="UvrABC system protein C"/>
    <property type="match status" value="1"/>
</dbReference>
<dbReference type="Gene3D" id="1.10.150.20">
    <property type="entry name" value="5' to 3' exonuclease, C-terminal subdomain"/>
    <property type="match status" value="1"/>
</dbReference>
<dbReference type="Gene3D" id="3.40.1440.10">
    <property type="entry name" value="GIY-YIG endonuclease"/>
    <property type="match status" value="1"/>
</dbReference>
<dbReference type="Gene3D" id="4.10.860.10">
    <property type="entry name" value="UVR domain"/>
    <property type="match status" value="1"/>
</dbReference>
<dbReference type="Gene3D" id="3.30.420.340">
    <property type="entry name" value="UvrC, RNAse H endonuclease domain"/>
    <property type="match status" value="1"/>
</dbReference>
<dbReference type="HAMAP" id="MF_00203">
    <property type="entry name" value="UvrC"/>
    <property type="match status" value="1"/>
</dbReference>
<dbReference type="InterPro" id="IPR000305">
    <property type="entry name" value="GIY-YIG_endonuc"/>
</dbReference>
<dbReference type="InterPro" id="IPR035901">
    <property type="entry name" value="GIY-YIG_endonuc_sf"/>
</dbReference>
<dbReference type="InterPro" id="IPR047296">
    <property type="entry name" value="GIY-YIG_UvrC_Cho"/>
</dbReference>
<dbReference type="InterPro" id="IPR003583">
    <property type="entry name" value="Hlx-hairpin-Hlx_DNA-bd_motif"/>
</dbReference>
<dbReference type="InterPro" id="IPR010994">
    <property type="entry name" value="RuvA_2-like"/>
</dbReference>
<dbReference type="InterPro" id="IPR001943">
    <property type="entry name" value="UVR_dom"/>
</dbReference>
<dbReference type="InterPro" id="IPR036876">
    <property type="entry name" value="UVR_dom_sf"/>
</dbReference>
<dbReference type="InterPro" id="IPR050066">
    <property type="entry name" value="UvrABC_protein_C"/>
</dbReference>
<dbReference type="InterPro" id="IPR004791">
    <property type="entry name" value="UvrC"/>
</dbReference>
<dbReference type="InterPro" id="IPR001162">
    <property type="entry name" value="UvrC_RNase_H_dom"/>
</dbReference>
<dbReference type="InterPro" id="IPR038476">
    <property type="entry name" value="UvrC_RNase_H_dom_sf"/>
</dbReference>
<dbReference type="NCBIfam" id="NF001824">
    <property type="entry name" value="PRK00558.1-5"/>
    <property type="match status" value="1"/>
</dbReference>
<dbReference type="NCBIfam" id="TIGR00194">
    <property type="entry name" value="uvrC"/>
    <property type="match status" value="1"/>
</dbReference>
<dbReference type="PANTHER" id="PTHR30562:SF1">
    <property type="entry name" value="UVRABC SYSTEM PROTEIN C"/>
    <property type="match status" value="1"/>
</dbReference>
<dbReference type="PANTHER" id="PTHR30562">
    <property type="entry name" value="UVRC/OXIDOREDUCTASE"/>
    <property type="match status" value="1"/>
</dbReference>
<dbReference type="Pfam" id="PF01541">
    <property type="entry name" value="GIY-YIG"/>
    <property type="match status" value="1"/>
</dbReference>
<dbReference type="Pfam" id="PF14520">
    <property type="entry name" value="HHH_5"/>
    <property type="match status" value="1"/>
</dbReference>
<dbReference type="Pfam" id="PF02151">
    <property type="entry name" value="UVR"/>
    <property type="match status" value="1"/>
</dbReference>
<dbReference type="Pfam" id="PF22920">
    <property type="entry name" value="UvrC_RNaseH"/>
    <property type="match status" value="1"/>
</dbReference>
<dbReference type="Pfam" id="PF08459">
    <property type="entry name" value="UvrC_RNaseH_dom"/>
    <property type="match status" value="1"/>
</dbReference>
<dbReference type="SMART" id="SM00465">
    <property type="entry name" value="GIYc"/>
    <property type="match status" value="1"/>
</dbReference>
<dbReference type="SMART" id="SM00278">
    <property type="entry name" value="HhH1"/>
    <property type="match status" value="2"/>
</dbReference>
<dbReference type="SUPFAM" id="SSF46600">
    <property type="entry name" value="C-terminal UvrC-binding domain of UvrB"/>
    <property type="match status" value="1"/>
</dbReference>
<dbReference type="SUPFAM" id="SSF82771">
    <property type="entry name" value="GIY-YIG endonuclease"/>
    <property type="match status" value="1"/>
</dbReference>
<dbReference type="SUPFAM" id="SSF47781">
    <property type="entry name" value="RuvA domain 2-like"/>
    <property type="match status" value="1"/>
</dbReference>
<dbReference type="PROSITE" id="PS50164">
    <property type="entry name" value="GIY_YIG"/>
    <property type="match status" value="1"/>
</dbReference>
<dbReference type="PROSITE" id="PS50151">
    <property type="entry name" value="UVR"/>
    <property type="match status" value="1"/>
</dbReference>
<dbReference type="PROSITE" id="PS50165">
    <property type="entry name" value="UVRC"/>
    <property type="match status" value="1"/>
</dbReference>